<evidence type="ECO:0000250" key="1">
    <source>
        <dbReference type="UniProtKB" id="P0A1P6"/>
    </source>
</evidence>
<evidence type="ECO:0000250" key="2">
    <source>
        <dbReference type="UniProtKB" id="P12425"/>
    </source>
</evidence>
<evidence type="ECO:0000250" key="3">
    <source>
        <dbReference type="UniProtKB" id="P77961"/>
    </source>
</evidence>
<evidence type="ECO:0000250" key="4">
    <source>
        <dbReference type="UniProtKB" id="P9WN39"/>
    </source>
</evidence>
<evidence type="ECO:0000250" key="5">
    <source>
        <dbReference type="UniProtKB" id="Q3V5W6"/>
    </source>
</evidence>
<evidence type="ECO:0000255" key="6">
    <source>
        <dbReference type="PROSITE-ProRule" id="PRU01330"/>
    </source>
</evidence>
<evidence type="ECO:0000255" key="7">
    <source>
        <dbReference type="PROSITE-ProRule" id="PRU01331"/>
    </source>
</evidence>
<evidence type="ECO:0000305" key="8"/>
<protein>
    <recommendedName>
        <fullName evidence="1">Glutamine synthetase</fullName>
        <shortName evidence="1">GS</shortName>
        <ecNumber evidence="1">6.3.1.2</ecNumber>
    </recommendedName>
    <alternativeName>
        <fullName evidence="8">Glutamate--ammonia ligase</fullName>
    </alternativeName>
    <alternativeName>
        <fullName evidence="1">Glutamine synthetase I beta</fullName>
        <shortName evidence="1">GSI beta</shortName>
    </alternativeName>
</protein>
<name>GLN1B_NEIGO</name>
<feature type="chain" id="PRO_0000153248" description="Glutamine synthetase">
    <location>
        <begin position="1"/>
        <end position="472"/>
    </location>
</feature>
<feature type="domain" description="GS beta-grasp" evidence="6">
    <location>
        <begin position="13"/>
        <end position="101"/>
    </location>
</feature>
<feature type="domain" description="GS catalytic" evidence="7">
    <location>
        <begin position="108"/>
        <end position="472"/>
    </location>
</feature>
<feature type="binding site" evidence="4">
    <location>
        <position position="133"/>
    </location>
    <ligand>
        <name>Mg(2+)</name>
        <dbReference type="ChEBI" id="CHEBI:18420"/>
        <label>1</label>
    </ligand>
</feature>
<feature type="binding site" evidence="4">
    <location>
        <position position="135"/>
    </location>
    <ligand>
        <name>Mg(2+)</name>
        <dbReference type="ChEBI" id="CHEBI:18420"/>
        <label>2</label>
    </ligand>
</feature>
<feature type="binding site" evidence="1">
    <location>
        <position position="211"/>
    </location>
    <ligand>
        <name>ATP</name>
        <dbReference type="ChEBI" id="CHEBI:30616"/>
    </ligand>
</feature>
<feature type="binding site" evidence="4">
    <location>
        <position position="216"/>
    </location>
    <ligand>
        <name>Mg(2+)</name>
        <dbReference type="ChEBI" id="CHEBI:18420"/>
        <label>2</label>
    </ligand>
</feature>
<feature type="binding site" evidence="4">
    <location>
        <position position="224"/>
    </location>
    <ligand>
        <name>Mg(2+)</name>
        <dbReference type="ChEBI" id="CHEBI:18420"/>
        <label>2</label>
    </ligand>
</feature>
<feature type="binding site" evidence="1">
    <location>
        <begin position="268"/>
        <end position="269"/>
    </location>
    <ligand>
        <name>L-glutamate</name>
        <dbReference type="ChEBI" id="CHEBI:29985"/>
    </ligand>
</feature>
<feature type="binding site" evidence="2">
    <location>
        <position position="269"/>
    </location>
    <ligand>
        <name>L-glutamate</name>
        <dbReference type="ChEBI" id="CHEBI:29985"/>
    </ligand>
</feature>
<feature type="binding site" evidence="4">
    <location>
        <position position="273"/>
    </location>
    <ligand>
        <name>Mg(2+)</name>
        <dbReference type="ChEBI" id="CHEBI:18420"/>
        <label>1</label>
    </ligand>
</feature>
<feature type="binding site" evidence="1">
    <location>
        <begin position="275"/>
        <end position="277"/>
    </location>
    <ligand>
        <name>ATP</name>
        <dbReference type="ChEBI" id="CHEBI:30616"/>
    </ligand>
</feature>
<feature type="binding site" evidence="3">
    <location>
        <position position="277"/>
    </location>
    <ligand>
        <name>ATP</name>
        <dbReference type="ChEBI" id="CHEBI:30616"/>
    </ligand>
</feature>
<feature type="binding site" evidence="1">
    <location>
        <position position="325"/>
    </location>
    <ligand>
        <name>L-glutamate</name>
        <dbReference type="ChEBI" id="CHEBI:29985"/>
    </ligand>
</feature>
<feature type="binding site" evidence="1">
    <location>
        <position position="331"/>
    </location>
    <ligand>
        <name>L-glutamate</name>
        <dbReference type="ChEBI" id="CHEBI:29985"/>
    </ligand>
</feature>
<feature type="binding site" evidence="4">
    <location>
        <position position="343"/>
    </location>
    <ligand>
        <name>ATP</name>
        <dbReference type="ChEBI" id="CHEBI:30616"/>
    </ligand>
</feature>
<feature type="binding site" evidence="4">
    <location>
        <position position="343"/>
    </location>
    <ligand>
        <name>L-glutamate</name>
        <dbReference type="ChEBI" id="CHEBI:29985"/>
    </ligand>
</feature>
<feature type="binding site" evidence="4">
    <location>
        <position position="348"/>
    </location>
    <ligand>
        <name>ATP</name>
        <dbReference type="ChEBI" id="CHEBI:30616"/>
    </ligand>
</feature>
<feature type="binding site" evidence="3">
    <location>
        <position position="356"/>
    </location>
    <ligand>
        <name>ATP</name>
        <dbReference type="ChEBI" id="CHEBI:30616"/>
    </ligand>
</feature>
<feature type="binding site" evidence="4">
    <location>
        <position position="361"/>
    </location>
    <ligand>
        <name>Mg(2+)</name>
        <dbReference type="ChEBI" id="CHEBI:18420"/>
        <label>1</label>
    </ligand>
</feature>
<feature type="binding site" evidence="1">
    <location>
        <position position="363"/>
    </location>
    <ligand>
        <name>L-glutamate</name>
        <dbReference type="ChEBI" id="CHEBI:29985"/>
    </ligand>
</feature>
<feature type="modified residue" description="O-AMP-tyrosine" evidence="4">
    <location>
        <position position="401"/>
    </location>
</feature>
<proteinExistence type="inferred from homology"/>
<accession>P25821</accession>
<comment type="function">
    <text evidence="1">Catalyzes the ATP-dependent biosynthesis of glutamine from glutamate and ammonia.</text>
</comment>
<comment type="catalytic activity">
    <reaction evidence="1">
        <text>L-glutamate + NH4(+) + ATP = L-glutamine + ADP + phosphate + H(+)</text>
        <dbReference type="Rhea" id="RHEA:16169"/>
        <dbReference type="ChEBI" id="CHEBI:15378"/>
        <dbReference type="ChEBI" id="CHEBI:28938"/>
        <dbReference type="ChEBI" id="CHEBI:29985"/>
        <dbReference type="ChEBI" id="CHEBI:30616"/>
        <dbReference type="ChEBI" id="CHEBI:43474"/>
        <dbReference type="ChEBI" id="CHEBI:58359"/>
        <dbReference type="ChEBI" id="CHEBI:456216"/>
        <dbReference type="EC" id="6.3.1.2"/>
    </reaction>
</comment>
<comment type="cofactor">
    <cofactor evidence="4">
        <name>Mg(2+)</name>
        <dbReference type="ChEBI" id="CHEBI:18420"/>
    </cofactor>
    <text evidence="4">Binds 2 Mg(2+) ions per subunit.</text>
</comment>
<comment type="activity regulation">
    <text evidence="5">The activity of this enzyme could be controlled by adenylation under conditions of abundant glutamine.</text>
</comment>
<comment type="subunit">
    <text evidence="1">Oligomer of 12 subunits arranged in the form of two hexameric ring.</text>
</comment>
<comment type="subcellular location">
    <subcellularLocation>
        <location evidence="4">Cytoplasm</location>
    </subcellularLocation>
</comment>
<comment type="similarity">
    <text evidence="8">Belongs to the glutamine synthetase family.</text>
</comment>
<gene>
    <name evidence="1" type="primary">glnA</name>
</gene>
<reference key="1">
    <citation type="submission" date="1997-06" db="EMBL/GenBank/DDBJ databases">
        <authorList>
            <person name="Seifert H.S."/>
        </authorList>
    </citation>
    <scope>NUCLEOTIDE SEQUENCE [GENOMIC DNA]</scope>
</reference>
<dbReference type="EC" id="6.3.1.2" evidence="1"/>
<dbReference type="EMBL" id="M84113">
    <property type="protein sequence ID" value="AAB61772.1"/>
    <property type="molecule type" value="Genomic_DNA"/>
</dbReference>
<dbReference type="RefSeq" id="WP_003689535.1">
    <property type="nucleotide sequence ID" value="NZ_VAHL01000023.1"/>
</dbReference>
<dbReference type="SMR" id="P25821"/>
<dbReference type="GO" id="GO:0005737">
    <property type="term" value="C:cytoplasm"/>
    <property type="evidence" value="ECO:0007669"/>
    <property type="project" value="UniProtKB-SubCell"/>
</dbReference>
<dbReference type="GO" id="GO:0016020">
    <property type="term" value="C:membrane"/>
    <property type="evidence" value="ECO:0007669"/>
    <property type="project" value="TreeGrafter"/>
</dbReference>
<dbReference type="GO" id="GO:0005524">
    <property type="term" value="F:ATP binding"/>
    <property type="evidence" value="ECO:0007669"/>
    <property type="project" value="UniProtKB-KW"/>
</dbReference>
<dbReference type="GO" id="GO:0004356">
    <property type="term" value="F:glutamine synthetase activity"/>
    <property type="evidence" value="ECO:0007669"/>
    <property type="project" value="UniProtKB-EC"/>
</dbReference>
<dbReference type="GO" id="GO:0046872">
    <property type="term" value="F:metal ion binding"/>
    <property type="evidence" value="ECO:0007669"/>
    <property type="project" value="UniProtKB-KW"/>
</dbReference>
<dbReference type="GO" id="GO:0006542">
    <property type="term" value="P:glutamine biosynthetic process"/>
    <property type="evidence" value="ECO:0007669"/>
    <property type="project" value="InterPro"/>
</dbReference>
<dbReference type="GO" id="GO:0019740">
    <property type="term" value="P:nitrogen utilization"/>
    <property type="evidence" value="ECO:0007669"/>
    <property type="project" value="TreeGrafter"/>
</dbReference>
<dbReference type="FunFam" id="3.10.20.70:FF:000001">
    <property type="entry name" value="Glutamine synthetase"/>
    <property type="match status" value="1"/>
</dbReference>
<dbReference type="FunFam" id="3.30.590.10:FF:000001">
    <property type="entry name" value="Glutamine synthetase"/>
    <property type="match status" value="1"/>
</dbReference>
<dbReference type="Gene3D" id="3.10.20.70">
    <property type="entry name" value="Glutamine synthetase, N-terminal domain"/>
    <property type="match status" value="1"/>
</dbReference>
<dbReference type="Gene3D" id="3.30.590.10">
    <property type="entry name" value="Glutamine synthetase/guanido kinase, catalytic domain"/>
    <property type="match status" value="1"/>
</dbReference>
<dbReference type="InterPro" id="IPR008147">
    <property type="entry name" value="Gln_synt_N"/>
</dbReference>
<dbReference type="InterPro" id="IPR036651">
    <property type="entry name" value="Gln_synt_N_sf"/>
</dbReference>
<dbReference type="InterPro" id="IPR014746">
    <property type="entry name" value="Gln_synth/guanido_kin_cat_dom"/>
</dbReference>
<dbReference type="InterPro" id="IPR008146">
    <property type="entry name" value="Gln_synth_cat_dom"/>
</dbReference>
<dbReference type="InterPro" id="IPR027303">
    <property type="entry name" value="Gln_synth_gly_rich_site"/>
</dbReference>
<dbReference type="InterPro" id="IPR004809">
    <property type="entry name" value="Gln_synth_I"/>
</dbReference>
<dbReference type="InterPro" id="IPR001637">
    <property type="entry name" value="Gln_synth_I_adenylation_site"/>
</dbReference>
<dbReference type="InterPro" id="IPR027302">
    <property type="entry name" value="Gln_synth_N_conserv_site"/>
</dbReference>
<dbReference type="NCBIfam" id="TIGR00653">
    <property type="entry name" value="GlnA"/>
    <property type="match status" value="1"/>
</dbReference>
<dbReference type="PANTHER" id="PTHR43407">
    <property type="entry name" value="GLUTAMINE SYNTHETASE"/>
    <property type="match status" value="1"/>
</dbReference>
<dbReference type="PANTHER" id="PTHR43407:SF2">
    <property type="entry name" value="GLUTAMINE SYNTHETASE"/>
    <property type="match status" value="1"/>
</dbReference>
<dbReference type="Pfam" id="PF00120">
    <property type="entry name" value="Gln-synt_C"/>
    <property type="match status" value="1"/>
</dbReference>
<dbReference type="Pfam" id="PF03951">
    <property type="entry name" value="Gln-synt_N"/>
    <property type="match status" value="1"/>
</dbReference>
<dbReference type="SMART" id="SM01230">
    <property type="entry name" value="Gln-synt_C"/>
    <property type="match status" value="1"/>
</dbReference>
<dbReference type="SUPFAM" id="SSF54368">
    <property type="entry name" value="Glutamine synthetase, N-terminal domain"/>
    <property type="match status" value="1"/>
</dbReference>
<dbReference type="SUPFAM" id="SSF55931">
    <property type="entry name" value="Glutamine synthetase/guanido kinase"/>
    <property type="match status" value="1"/>
</dbReference>
<dbReference type="PROSITE" id="PS00180">
    <property type="entry name" value="GLNA_1"/>
    <property type="match status" value="1"/>
</dbReference>
<dbReference type="PROSITE" id="PS00182">
    <property type="entry name" value="GLNA_ADENYLATION"/>
    <property type="match status" value="1"/>
</dbReference>
<dbReference type="PROSITE" id="PS00181">
    <property type="entry name" value="GLNA_ATP"/>
    <property type="match status" value="1"/>
</dbReference>
<dbReference type="PROSITE" id="PS51986">
    <property type="entry name" value="GS_BETA_GRASP"/>
    <property type="match status" value="1"/>
</dbReference>
<dbReference type="PROSITE" id="PS51987">
    <property type="entry name" value="GS_CATALYTIC"/>
    <property type="match status" value="1"/>
</dbReference>
<keyword id="KW-0067">ATP-binding</keyword>
<keyword id="KW-0963">Cytoplasm</keyword>
<keyword id="KW-0436">Ligase</keyword>
<keyword id="KW-0460">Magnesium</keyword>
<keyword id="KW-0479">Metal-binding</keyword>
<keyword id="KW-0547">Nucleotide-binding</keyword>
<keyword id="KW-0597">Phosphoprotein</keyword>
<organism>
    <name type="scientific">Neisseria gonorrhoeae</name>
    <dbReference type="NCBI Taxonomy" id="485"/>
    <lineage>
        <taxon>Bacteria</taxon>
        <taxon>Pseudomonadati</taxon>
        <taxon>Pseudomonadota</taxon>
        <taxon>Betaproteobacteria</taxon>
        <taxon>Neisseriales</taxon>
        <taxon>Neisseriaceae</taxon>
        <taxon>Neisseria</taxon>
    </lineage>
</organism>
<sequence>MSIKNAVKLIEKSKARFVDLRFTDTKGKQHHFTVPARIVLEGPEEWFENGQAFDGSSIGGWKGIQASDMQLRPDASTAFVDPFYDDVTVVITCDVIDPADGQGYDRDPRSIARRAEAYLKSSGIGDTAYFGPEPEFFVFDGVEFETDMHKTRYEITSESGAWASGLHMDGQNTGHRPAVKGGYAPVAPIDCGQDLRSAMVNILEGLGIEVEVHHSEVGTGSQMEIGTRFATLVKRADQTQDMKYVIQNVAHNFGKTATFMPKPIMGDNGSGMHVHQSIWKDGQNLFAGDGYAGLSDTALYYIGGIIKHAKALNAITNPSTNSYKRLVPHFEAPTKLAYSAKNRSASIRIPSVNSSKARRIEARFPDPTANPYLAFAALLMAGLDGIQNKIHPGDPADKNLYDLPPEEDALVPTVCASLEEALAALKADHEFLLRGGVFSKDWIDSYIAFKEEDVRRIRMAPHPLEFEMYYSL</sequence>